<sequence>MTDSASGASAVANIATPSNEPYDATRKQKSLDKTARIPIKIVPAEKLKKPEWIRVKAATGNSRFYEIKDILRANNLVTVCEEASCPNIGECFGKGTATFMIMGDKCTRRCPFCDVGHGRPDPLDANEPENLAKTIAQLRLNYVVITSVDRDDLRDGGAQHYVDCISRTRELSPATRIEVLVPDFRGRLEKALDILQACPPDVMNHNMETVPRLYKQARPGADYAHSLKLLKDFKARNPNLPTKSGLMVGLGETDEEILEVMRDMREHDIDMLTIGQYLAPSGHHLPVLRYVHPDTFKMFEEKAYEMGFTHAAVGAMVRSSYHADQQAHEAGFA</sequence>
<evidence type="ECO:0000255" key="1">
    <source>
        <dbReference type="HAMAP-Rule" id="MF_00206"/>
    </source>
</evidence>
<evidence type="ECO:0000255" key="2">
    <source>
        <dbReference type="PROSITE-ProRule" id="PRU01266"/>
    </source>
</evidence>
<evidence type="ECO:0000256" key="3">
    <source>
        <dbReference type="SAM" id="MobiDB-lite"/>
    </source>
</evidence>
<comment type="function">
    <text evidence="1">Catalyzes the radical-mediated insertion of two sulfur atoms into the C-6 and C-8 positions of the octanoyl moiety bound to the lipoyl domains of lipoate-dependent enzymes, thereby converting the octanoylated domains into lipoylated derivatives.</text>
</comment>
<comment type="catalytic activity">
    <reaction evidence="1">
        <text>[[Fe-S] cluster scaffold protein carrying a second [4Fe-4S](2+) cluster] + N(6)-octanoyl-L-lysyl-[protein] + 2 oxidized [2Fe-2S]-[ferredoxin] + 2 S-adenosyl-L-methionine + 4 H(+) = [[Fe-S] cluster scaffold protein] + N(6)-[(R)-dihydrolipoyl]-L-lysyl-[protein] + 4 Fe(3+) + 2 hydrogen sulfide + 2 5'-deoxyadenosine + 2 L-methionine + 2 reduced [2Fe-2S]-[ferredoxin]</text>
        <dbReference type="Rhea" id="RHEA:16585"/>
        <dbReference type="Rhea" id="RHEA-COMP:9928"/>
        <dbReference type="Rhea" id="RHEA-COMP:10000"/>
        <dbReference type="Rhea" id="RHEA-COMP:10001"/>
        <dbReference type="Rhea" id="RHEA-COMP:10475"/>
        <dbReference type="Rhea" id="RHEA-COMP:14568"/>
        <dbReference type="Rhea" id="RHEA-COMP:14569"/>
        <dbReference type="ChEBI" id="CHEBI:15378"/>
        <dbReference type="ChEBI" id="CHEBI:17319"/>
        <dbReference type="ChEBI" id="CHEBI:29034"/>
        <dbReference type="ChEBI" id="CHEBI:29919"/>
        <dbReference type="ChEBI" id="CHEBI:33722"/>
        <dbReference type="ChEBI" id="CHEBI:33737"/>
        <dbReference type="ChEBI" id="CHEBI:33738"/>
        <dbReference type="ChEBI" id="CHEBI:57844"/>
        <dbReference type="ChEBI" id="CHEBI:59789"/>
        <dbReference type="ChEBI" id="CHEBI:78809"/>
        <dbReference type="ChEBI" id="CHEBI:83100"/>
        <dbReference type="EC" id="2.8.1.8"/>
    </reaction>
</comment>
<comment type="cofactor">
    <cofactor evidence="1">
        <name>[4Fe-4S] cluster</name>
        <dbReference type="ChEBI" id="CHEBI:49883"/>
    </cofactor>
    <text evidence="1">Binds 2 [4Fe-4S] clusters per subunit. One cluster is coordinated with 3 cysteines and an exchangeable S-adenosyl-L-methionine.</text>
</comment>
<comment type="pathway">
    <text evidence="1">Protein modification; protein lipoylation via endogenous pathway; protein N(6)-(lipoyl)lysine from octanoyl-[acyl-carrier-protein]: step 2/2.</text>
</comment>
<comment type="subcellular location">
    <subcellularLocation>
        <location evidence="1">Cytoplasm</location>
    </subcellularLocation>
</comment>
<comment type="similarity">
    <text evidence="1">Belongs to the radical SAM superfamily. Lipoyl synthase family.</text>
</comment>
<accession>Q8Y2L3</accession>
<keyword id="KW-0004">4Fe-4S</keyword>
<keyword id="KW-0963">Cytoplasm</keyword>
<keyword id="KW-0408">Iron</keyword>
<keyword id="KW-0411">Iron-sulfur</keyword>
<keyword id="KW-0479">Metal-binding</keyword>
<keyword id="KW-1185">Reference proteome</keyword>
<keyword id="KW-0949">S-adenosyl-L-methionine</keyword>
<keyword id="KW-0808">Transferase</keyword>
<feature type="chain" id="PRO_0000102345" description="Lipoyl synthase">
    <location>
        <begin position="1"/>
        <end position="333"/>
    </location>
</feature>
<feature type="domain" description="Radical SAM core" evidence="2">
    <location>
        <begin position="91"/>
        <end position="309"/>
    </location>
</feature>
<feature type="region of interest" description="Disordered" evidence="3">
    <location>
        <begin position="1"/>
        <end position="29"/>
    </location>
</feature>
<feature type="binding site" evidence="1">
    <location>
        <position position="80"/>
    </location>
    <ligand>
        <name>[4Fe-4S] cluster</name>
        <dbReference type="ChEBI" id="CHEBI:49883"/>
        <label>1</label>
    </ligand>
</feature>
<feature type="binding site" evidence="1">
    <location>
        <position position="85"/>
    </location>
    <ligand>
        <name>[4Fe-4S] cluster</name>
        <dbReference type="ChEBI" id="CHEBI:49883"/>
        <label>1</label>
    </ligand>
</feature>
<feature type="binding site" evidence="1">
    <location>
        <position position="91"/>
    </location>
    <ligand>
        <name>[4Fe-4S] cluster</name>
        <dbReference type="ChEBI" id="CHEBI:49883"/>
        <label>1</label>
    </ligand>
</feature>
<feature type="binding site" evidence="1">
    <location>
        <position position="106"/>
    </location>
    <ligand>
        <name>[4Fe-4S] cluster</name>
        <dbReference type="ChEBI" id="CHEBI:49883"/>
        <label>2</label>
        <note>4Fe-4S-S-AdoMet</note>
    </ligand>
</feature>
<feature type="binding site" evidence="1">
    <location>
        <position position="110"/>
    </location>
    <ligand>
        <name>[4Fe-4S] cluster</name>
        <dbReference type="ChEBI" id="CHEBI:49883"/>
        <label>2</label>
        <note>4Fe-4S-S-AdoMet</note>
    </ligand>
</feature>
<feature type="binding site" evidence="1">
    <location>
        <position position="113"/>
    </location>
    <ligand>
        <name>[4Fe-4S] cluster</name>
        <dbReference type="ChEBI" id="CHEBI:49883"/>
        <label>2</label>
        <note>4Fe-4S-S-AdoMet</note>
    </ligand>
</feature>
<feature type="binding site" evidence="1">
    <location>
        <position position="320"/>
    </location>
    <ligand>
        <name>[4Fe-4S] cluster</name>
        <dbReference type="ChEBI" id="CHEBI:49883"/>
        <label>1</label>
    </ligand>
</feature>
<dbReference type="EC" id="2.8.1.8" evidence="1"/>
<dbReference type="EMBL" id="AL646052">
    <property type="protein sequence ID" value="CAD13850.1"/>
    <property type="molecule type" value="Genomic_DNA"/>
</dbReference>
<dbReference type="RefSeq" id="WP_011000286.1">
    <property type="nucleotide sequence ID" value="NC_003295.1"/>
</dbReference>
<dbReference type="SMR" id="Q8Y2L3"/>
<dbReference type="STRING" id="267608.RSc0322"/>
<dbReference type="EnsemblBacteria" id="CAD13850">
    <property type="protein sequence ID" value="CAD13850"/>
    <property type="gene ID" value="RSc0322"/>
</dbReference>
<dbReference type="KEGG" id="rso:RSc0322"/>
<dbReference type="eggNOG" id="COG0320">
    <property type="taxonomic scope" value="Bacteria"/>
</dbReference>
<dbReference type="HOGENOM" id="CLU_033144_2_1_4"/>
<dbReference type="UniPathway" id="UPA00538">
    <property type="reaction ID" value="UER00593"/>
</dbReference>
<dbReference type="Proteomes" id="UP000001436">
    <property type="component" value="Chromosome"/>
</dbReference>
<dbReference type="GO" id="GO:0005737">
    <property type="term" value="C:cytoplasm"/>
    <property type="evidence" value="ECO:0007669"/>
    <property type="project" value="UniProtKB-SubCell"/>
</dbReference>
<dbReference type="GO" id="GO:0051539">
    <property type="term" value="F:4 iron, 4 sulfur cluster binding"/>
    <property type="evidence" value="ECO:0007669"/>
    <property type="project" value="UniProtKB-UniRule"/>
</dbReference>
<dbReference type="GO" id="GO:0016992">
    <property type="term" value="F:lipoate synthase activity"/>
    <property type="evidence" value="ECO:0007669"/>
    <property type="project" value="UniProtKB-UniRule"/>
</dbReference>
<dbReference type="GO" id="GO:0046872">
    <property type="term" value="F:metal ion binding"/>
    <property type="evidence" value="ECO:0007669"/>
    <property type="project" value="UniProtKB-KW"/>
</dbReference>
<dbReference type="CDD" id="cd01335">
    <property type="entry name" value="Radical_SAM"/>
    <property type="match status" value="1"/>
</dbReference>
<dbReference type="FunFam" id="3.20.20.70:FF:000040">
    <property type="entry name" value="Lipoyl synthase"/>
    <property type="match status" value="1"/>
</dbReference>
<dbReference type="Gene3D" id="3.20.20.70">
    <property type="entry name" value="Aldolase class I"/>
    <property type="match status" value="1"/>
</dbReference>
<dbReference type="HAMAP" id="MF_00206">
    <property type="entry name" value="Lipoyl_synth"/>
    <property type="match status" value="1"/>
</dbReference>
<dbReference type="InterPro" id="IPR013785">
    <property type="entry name" value="Aldolase_TIM"/>
</dbReference>
<dbReference type="InterPro" id="IPR006638">
    <property type="entry name" value="Elp3/MiaA/NifB-like_rSAM"/>
</dbReference>
<dbReference type="InterPro" id="IPR031691">
    <property type="entry name" value="LIAS_N"/>
</dbReference>
<dbReference type="InterPro" id="IPR003698">
    <property type="entry name" value="Lipoyl_synth"/>
</dbReference>
<dbReference type="InterPro" id="IPR007197">
    <property type="entry name" value="rSAM"/>
</dbReference>
<dbReference type="NCBIfam" id="TIGR00510">
    <property type="entry name" value="lipA"/>
    <property type="match status" value="1"/>
</dbReference>
<dbReference type="NCBIfam" id="NF004019">
    <property type="entry name" value="PRK05481.1"/>
    <property type="match status" value="1"/>
</dbReference>
<dbReference type="NCBIfam" id="NF009544">
    <property type="entry name" value="PRK12928.1"/>
    <property type="match status" value="1"/>
</dbReference>
<dbReference type="PANTHER" id="PTHR10949">
    <property type="entry name" value="LIPOYL SYNTHASE"/>
    <property type="match status" value="1"/>
</dbReference>
<dbReference type="PANTHER" id="PTHR10949:SF0">
    <property type="entry name" value="LIPOYL SYNTHASE, MITOCHONDRIAL"/>
    <property type="match status" value="1"/>
</dbReference>
<dbReference type="Pfam" id="PF16881">
    <property type="entry name" value="LIAS_N"/>
    <property type="match status" value="1"/>
</dbReference>
<dbReference type="Pfam" id="PF04055">
    <property type="entry name" value="Radical_SAM"/>
    <property type="match status" value="1"/>
</dbReference>
<dbReference type="PIRSF" id="PIRSF005963">
    <property type="entry name" value="Lipoyl_synth"/>
    <property type="match status" value="1"/>
</dbReference>
<dbReference type="SFLD" id="SFLDF00271">
    <property type="entry name" value="lipoyl_synthase"/>
    <property type="match status" value="1"/>
</dbReference>
<dbReference type="SFLD" id="SFLDS00029">
    <property type="entry name" value="Radical_SAM"/>
    <property type="match status" value="1"/>
</dbReference>
<dbReference type="SMART" id="SM00729">
    <property type="entry name" value="Elp3"/>
    <property type="match status" value="1"/>
</dbReference>
<dbReference type="SUPFAM" id="SSF102114">
    <property type="entry name" value="Radical SAM enzymes"/>
    <property type="match status" value="1"/>
</dbReference>
<dbReference type="PROSITE" id="PS51918">
    <property type="entry name" value="RADICAL_SAM"/>
    <property type="match status" value="1"/>
</dbReference>
<name>LIPA_RALN1</name>
<organism>
    <name type="scientific">Ralstonia nicotianae (strain ATCC BAA-1114 / GMI1000)</name>
    <name type="common">Ralstonia solanacearum</name>
    <dbReference type="NCBI Taxonomy" id="267608"/>
    <lineage>
        <taxon>Bacteria</taxon>
        <taxon>Pseudomonadati</taxon>
        <taxon>Pseudomonadota</taxon>
        <taxon>Betaproteobacteria</taxon>
        <taxon>Burkholderiales</taxon>
        <taxon>Burkholderiaceae</taxon>
        <taxon>Ralstonia</taxon>
        <taxon>Ralstonia solanacearum species complex</taxon>
    </lineage>
</organism>
<protein>
    <recommendedName>
        <fullName evidence="1">Lipoyl synthase</fullName>
        <ecNumber evidence="1">2.8.1.8</ecNumber>
    </recommendedName>
    <alternativeName>
        <fullName evidence="1">Lip-syn</fullName>
        <shortName evidence="1">LS</shortName>
    </alternativeName>
    <alternativeName>
        <fullName evidence="1">Lipoate synthase</fullName>
    </alternativeName>
    <alternativeName>
        <fullName evidence="1">Lipoic acid synthase</fullName>
    </alternativeName>
    <alternativeName>
        <fullName evidence="1">Sulfur insertion protein LipA</fullName>
    </alternativeName>
</protein>
<gene>
    <name evidence="1" type="primary">lipA</name>
    <name type="ordered locus">RSc0322</name>
    <name type="ORF">RS03289</name>
</gene>
<proteinExistence type="inferred from homology"/>
<reference key="1">
    <citation type="journal article" date="2002" name="Nature">
        <title>Genome sequence of the plant pathogen Ralstonia solanacearum.</title>
        <authorList>
            <person name="Salanoubat M."/>
            <person name="Genin S."/>
            <person name="Artiguenave F."/>
            <person name="Gouzy J."/>
            <person name="Mangenot S."/>
            <person name="Arlat M."/>
            <person name="Billault A."/>
            <person name="Brottier P."/>
            <person name="Camus J.-C."/>
            <person name="Cattolico L."/>
            <person name="Chandler M."/>
            <person name="Choisne N."/>
            <person name="Claudel-Renard C."/>
            <person name="Cunnac S."/>
            <person name="Demange N."/>
            <person name="Gaspin C."/>
            <person name="Lavie M."/>
            <person name="Moisan A."/>
            <person name="Robert C."/>
            <person name="Saurin W."/>
            <person name="Schiex T."/>
            <person name="Siguier P."/>
            <person name="Thebault P."/>
            <person name="Whalen M."/>
            <person name="Wincker P."/>
            <person name="Levy M."/>
            <person name="Weissenbach J."/>
            <person name="Boucher C.A."/>
        </authorList>
    </citation>
    <scope>NUCLEOTIDE SEQUENCE [LARGE SCALE GENOMIC DNA]</scope>
    <source>
        <strain>ATCC BAA-1114 / GMI1000</strain>
    </source>
</reference>